<accession>Q44290</accession>
<organism>
    <name type="scientific">Nostoc sp. (strain PCC 7120 / SAG 25.82 / UTEX 2576)</name>
    <dbReference type="NCBI Taxonomy" id="103690"/>
    <lineage>
        <taxon>Bacteria</taxon>
        <taxon>Bacillati</taxon>
        <taxon>Cyanobacteriota</taxon>
        <taxon>Cyanophyceae</taxon>
        <taxon>Nostocales</taxon>
        <taxon>Nostocaceae</taxon>
        <taxon>Nostoc</taxon>
    </lineage>
</organism>
<name>NIFV1_NOSS1</name>
<proteinExistence type="inferred from homology"/>
<feature type="chain" id="PRO_0000140456" description="Homocitrate synthase 1">
    <location>
        <begin position="1"/>
        <end position="377"/>
    </location>
</feature>
<feature type="domain" description="Pyruvate carboxyltransferase" evidence="1">
    <location>
        <begin position="4"/>
        <end position="255"/>
    </location>
</feature>
<feature type="sequence conflict" description="In Ref. 1; CAA68174." evidence="2" ref="1">
    <original>GIQIA</original>
    <variation>DVK</variation>
    <location>
        <begin position="99"/>
        <end position="103"/>
    </location>
</feature>
<feature type="sequence conflict" description="In Ref. 1; CAA68174." evidence="2" ref="1">
    <original>A</original>
    <variation>L</variation>
    <location>
        <position position="203"/>
    </location>
</feature>
<feature type="sequence conflict" description="In Ref. 1; CAA68174." evidence="2" ref="1">
    <original>Q</original>
    <variation>L</variation>
    <location>
        <position position="349"/>
    </location>
</feature>
<protein>
    <recommendedName>
        <fullName>Homocitrate synthase 1</fullName>
        <ecNumber>2.3.3.14</ecNumber>
    </recommendedName>
</protein>
<keyword id="KW-0535">Nitrogen fixation</keyword>
<keyword id="KW-1185">Reference proteome</keyword>
<keyword id="KW-0808">Transferase</keyword>
<dbReference type="EC" id="2.3.3.14"/>
<dbReference type="EMBL" id="X99902">
    <property type="protein sequence ID" value="CAA68174.1"/>
    <property type="status" value="ALT_FRAME"/>
    <property type="molecule type" value="Genomic_DNA"/>
</dbReference>
<dbReference type="EMBL" id="BA000019">
    <property type="protein sequence ID" value="BAB73364.1"/>
    <property type="molecule type" value="Genomic_DNA"/>
</dbReference>
<dbReference type="PIR" id="AD1982">
    <property type="entry name" value="AD1982"/>
</dbReference>
<dbReference type="RefSeq" id="WP_010995579.1">
    <property type="nucleotide sequence ID" value="NZ_RSCN01000040.1"/>
</dbReference>
<dbReference type="SMR" id="Q44290"/>
<dbReference type="STRING" id="103690.gene:10493422"/>
<dbReference type="KEGG" id="ana:alr1407"/>
<dbReference type="eggNOG" id="COG0119">
    <property type="taxonomic scope" value="Bacteria"/>
</dbReference>
<dbReference type="OrthoDB" id="570404at2"/>
<dbReference type="Proteomes" id="UP000002483">
    <property type="component" value="Chromosome"/>
</dbReference>
<dbReference type="GO" id="GO:0004410">
    <property type="term" value="F:homocitrate synthase activity"/>
    <property type="evidence" value="ECO:0007669"/>
    <property type="project" value="UniProtKB-EC"/>
</dbReference>
<dbReference type="GO" id="GO:0009058">
    <property type="term" value="P:biosynthetic process"/>
    <property type="evidence" value="ECO:0007669"/>
    <property type="project" value="UniProtKB-ARBA"/>
</dbReference>
<dbReference type="GO" id="GO:0019752">
    <property type="term" value="P:carboxylic acid metabolic process"/>
    <property type="evidence" value="ECO:0007669"/>
    <property type="project" value="InterPro"/>
</dbReference>
<dbReference type="GO" id="GO:0009399">
    <property type="term" value="P:nitrogen fixation"/>
    <property type="evidence" value="ECO:0007669"/>
    <property type="project" value="UniProtKB-KW"/>
</dbReference>
<dbReference type="CDD" id="cd07939">
    <property type="entry name" value="DRE_TIM_NifV"/>
    <property type="match status" value="1"/>
</dbReference>
<dbReference type="FunFam" id="1.10.238.260:FF:000001">
    <property type="entry name" value="2-isopropylmalate synthase"/>
    <property type="match status" value="1"/>
</dbReference>
<dbReference type="Gene3D" id="1.10.238.260">
    <property type="match status" value="1"/>
</dbReference>
<dbReference type="Gene3D" id="3.20.20.70">
    <property type="entry name" value="Aldolase class I"/>
    <property type="match status" value="1"/>
</dbReference>
<dbReference type="InterPro" id="IPR002034">
    <property type="entry name" value="AIPM/Hcit_synth_CS"/>
</dbReference>
<dbReference type="InterPro" id="IPR013785">
    <property type="entry name" value="Aldolase_TIM"/>
</dbReference>
<dbReference type="InterPro" id="IPR054691">
    <property type="entry name" value="LeuA/HCS_post-cat"/>
</dbReference>
<dbReference type="InterPro" id="IPR013477">
    <property type="entry name" value="NifV/FrbC"/>
</dbReference>
<dbReference type="InterPro" id="IPR000891">
    <property type="entry name" value="PYR_CT"/>
</dbReference>
<dbReference type="NCBIfam" id="TIGR02660">
    <property type="entry name" value="nifV_homocitr"/>
    <property type="match status" value="1"/>
</dbReference>
<dbReference type="PANTHER" id="PTHR42880">
    <property type="entry name" value="HOMOCITRATE SYNTHASE"/>
    <property type="match status" value="1"/>
</dbReference>
<dbReference type="PANTHER" id="PTHR42880:SF1">
    <property type="entry name" value="ISOPROPYLMALATE_HOMOCITRATE_CITRAMALATE SYNTHASE FAMILY PROTEIN"/>
    <property type="match status" value="1"/>
</dbReference>
<dbReference type="Pfam" id="PF22617">
    <property type="entry name" value="HCS_D2"/>
    <property type="match status" value="1"/>
</dbReference>
<dbReference type="Pfam" id="PF00682">
    <property type="entry name" value="HMGL-like"/>
    <property type="match status" value="1"/>
</dbReference>
<dbReference type="SUPFAM" id="SSF51569">
    <property type="entry name" value="Aldolase"/>
    <property type="match status" value="1"/>
</dbReference>
<dbReference type="PROSITE" id="PS00815">
    <property type="entry name" value="AIPM_HOMOCIT_SYNTH_1"/>
    <property type="match status" value="1"/>
</dbReference>
<dbReference type="PROSITE" id="PS00816">
    <property type="entry name" value="AIPM_HOMOCIT_SYNTH_2"/>
    <property type="match status" value="1"/>
</dbReference>
<dbReference type="PROSITE" id="PS50991">
    <property type="entry name" value="PYR_CT"/>
    <property type="match status" value="1"/>
</dbReference>
<reference key="1">
    <citation type="journal article" date="1997" name="J. Bacteriol.">
        <title>Identification and characterization of the nifV-nifZ-nifT gene region from the filamentous cyanobacterium Anabaena sp. strain PCC 7120.</title>
        <authorList>
            <person name="Stricker O."/>
            <person name="Masepohl B."/>
            <person name="Klipp W."/>
            <person name="Boehme H."/>
        </authorList>
    </citation>
    <scope>NUCLEOTIDE SEQUENCE [GENOMIC DNA]</scope>
</reference>
<reference key="2">
    <citation type="journal article" date="2001" name="DNA Res.">
        <title>Complete genomic sequence of the filamentous nitrogen-fixing cyanobacterium Anabaena sp. strain PCC 7120.</title>
        <authorList>
            <person name="Kaneko T."/>
            <person name="Nakamura Y."/>
            <person name="Wolk C.P."/>
            <person name="Kuritz T."/>
            <person name="Sasamoto S."/>
            <person name="Watanabe A."/>
            <person name="Iriguchi M."/>
            <person name="Ishikawa A."/>
            <person name="Kawashima K."/>
            <person name="Kimura T."/>
            <person name="Kishida Y."/>
            <person name="Kohara M."/>
            <person name="Matsumoto M."/>
            <person name="Matsuno A."/>
            <person name="Muraki A."/>
            <person name="Nakazaki N."/>
            <person name="Shimpo S."/>
            <person name="Sugimoto M."/>
            <person name="Takazawa M."/>
            <person name="Yamada M."/>
            <person name="Yasuda M."/>
            <person name="Tabata S."/>
        </authorList>
    </citation>
    <scope>NUCLEOTIDE SEQUENCE [LARGE SCALE GENOMIC DNA]</scope>
    <source>
        <strain>PCC 7120 / SAG 25.82 / UTEX 2576</strain>
    </source>
</reference>
<gene>
    <name type="primary">nifV1</name>
    <name type="synonym">nifV</name>
    <name type="ordered locus">alr1407</name>
</gene>
<evidence type="ECO:0000255" key="1">
    <source>
        <dbReference type="PROSITE-ProRule" id="PRU01151"/>
    </source>
</evidence>
<evidence type="ECO:0000305" key="2"/>
<comment type="function">
    <text>This protein is a Fe-Mo-cofactor biosynthetic component.</text>
</comment>
<comment type="catalytic activity">
    <reaction>
        <text>acetyl-CoA + 2-oxoglutarate + H2O = (2R)-homocitrate + CoA + H(+)</text>
        <dbReference type="Rhea" id="RHEA:12929"/>
        <dbReference type="ChEBI" id="CHEBI:15377"/>
        <dbReference type="ChEBI" id="CHEBI:15378"/>
        <dbReference type="ChEBI" id="CHEBI:16810"/>
        <dbReference type="ChEBI" id="CHEBI:57287"/>
        <dbReference type="ChEBI" id="CHEBI:57288"/>
        <dbReference type="ChEBI" id="CHEBI:58884"/>
        <dbReference type="EC" id="2.3.3.14"/>
    </reaction>
</comment>
<comment type="similarity">
    <text evidence="2">Belongs to the alpha-IPM synthase/homocitrate synthase family.</text>
</comment>
<comment type="sequence caution" evidence="2">
    <conflict type="frameshift">
        <sequence resource="EMBL-CDS" id="CAA68174"/>
    </conflict>
</comment>
<sequence>MNKVLINDTTLRDGEQAAGVVFTLEEKVAIAKFLDTIGVPELEVGIPAMGEEEMRAICAISNLGLKANLLAWNRAVISDIKASVACGMERVHIAIPVSGIQIAAKFHGQWRVSLQRLKDCISFAVDQGLWVAVGGEDSSRADENFLLDVALYAQEWGASRFRFCDTVGVLDPFTTYGKVKLLVSALTIPVEVHTHNDFGMATANALAGIKAGASSVNTTVIGLGERAGNAALEEVVMAIKRIYGVDMGIDTPRLLELSQLVAAASGANVPPWKAIVGENTFAHESGIHAHGVLQNPDTYEPFAPEEVGWERRLVVGKHSGRHSVSNLLEQHGIFLNPEETQSVLDAVRQQSIKKKRSLTTEELLNLVKEQRYSHAAR</sequence>